<comment type="catalytic activity">
    <reaction evidence="1">
        <text>D-erythro-1-(imidazol-4-yl)glycerol 3-phosphate = 3-(imidazol-4-yl)-2-oxopropyl phosphate + H2O</text>
        <dbReference type="Rhea" id="RHEA:11040"/>
        <dbReference type="ChEBI" id="CHEBI:15377"/>
        <dbReference type="ChEBI" id="CHEBI:57766"/>
        <dbReference type="ChEBI" id="CHEBI:58278"/>
        <dbReference type="EC" id="4.2.1.19"/>
    </reaction>
</comment>
<comment type="pathway">
    <text evidence="1">Amino-acid biosynthesis; L-histidine biosynthesis; L-histidine from 5-phospho-alpha-D-ribose 1-diphosphate: step 6/9.</text>
</comment>
<comment type="subcellular location">
    <subcellularLocation>
        <location evidence="1">Cytoplasm</location>
    </subcellularLocation>
</comment>
<comment type="similarity">
    <text evidence="1">Belongs to the imidazoleglycerol-phosphate dehydratase family.</text>
</comment>
<organism>
    <name type="scientific">Syntrophobacter fumaroxidans (strain DSM 10017 / MPOB)</name>
    <dbReference type="NCBI Taxonomy" id="335543"/>
    <lineage>
        <taxon>Bacteria</taxon>
        <taxon>Pseudomonadati</taxon>
        <taxon>Thermodesulfobacteriota</taxon>
        <taxon>Syntrophobacteria</taxon>
        <taxon>Syntrophobacterales</taxon>
        <taxon>Syntrophobacteraceae</taxon>
        <taxon>Syntrophobacter</taxon>
    </lineage>
</organism>
<protein>
    <recommendedName>
        <fullName evidence="1">Imidazoleglycerol-phosphate dehydratase</fullName>
        <shortName evidence="1">IGPD</shortName>
        <ecNumber evidence="1">4.2.1.19</ecNumber>
    </recommendedName>
</protein>
<keyword id="KW-0028">Amino-acid biosynthesis</keyword>
<keyword id="KW-0963">Cytoplasm</keyword>
<keyword id="KW-0368">Histidine biosynthesis</keyword>
<keyword id="KW-0456">Lyase</keyword>
<keyword id="KW-1185">Reference proteome</keyword>
<evidence type="ECO:0000255" key="1">
    <source>
        <dbReference type="HAMAP-Rule" id="MF_00076"/>
    </source>
</evidence>
<gene>
    <name evidence="1" type="primary">hisB</name>
    <name type="ordered locus">Sfum_4004</name>
</gene>
<proteinExistence type="inferred from homology"/>
<accession>A0LQG8</accession>
<reference key="1">
    <citation type="submission" date="2006-10" db="EMBL/GenBank/DDBJ databases">
        <title>Complete sequence of Syntrophobacter fumaroxidans MPOB.</title>
        <authorList>
            <consortium name="US DOE Joint Genome Institute"/>
            <person name="Copeland A."/>
            <person name="Lucas S."/>
            <person name="Lapidus A."/>
            <person name="Barry K."/>
            <person name="Detter J.C."/>
            <person name="Glavina del Rio T."/>
            <person name="Hammon N."/>
            <person name="Israni S."/>
            <person name="Pitluck S."/>
            <person name="Goltsman E.G."/>
            <person name="Martinez M."/>
            <person name="Schmutz J."/>
            <person name="Larimer F."/>
            <person name="Land M."/>
            <person name="Hauser L."/>
            <person name="Kyrpides N."/>
            <person name="Kim E."/>
            <person name="Boone D.R."/>
            <person name="Brockman F."/>
            <person name="Culley D."/>
            <person name="Ferry J."/>
            <person name="Gunsalus R."/>
            <person name="McInerney M.J."/>
            <person name="Morrison M."/>
            <person name="Plugge C."/>
            <person name="Rohlin L."/>
            <person name="Scholten J."/>
            <person name="Sieber J."/>
            <person name="Stams A.J.M."/>
            <person name="Worm P."/>
            <person name="Henstra A.M."/>
            <person name="Richardson P."/>
        </authorList>
    </citation>
    <scope>NUCLEOTIDE SEQUENCE [LARGE SCALE GENOMIC DNA]</scope>
    <source>
        <strain>DSM 10017 / MPOB</strain>
    </source>
</reference>
<dbReference type="EC" id="4.2.1.19" evidence="1"/>
<dbReference type="EMBL" id="CP000478">
    <property type="protein sequence ID" value="ABK19670.1"/>
    <property type="molecule type" value="Genomic_DNA"/>
</dbReference>
<dbReference type="RefSeq" id="WP_011700783.1">
    <property type="nucleotide sequence ID" value="NC_008554.1"/>
</dbReference>
<dbReference type="SMR" id="A0LQG8"/>
<dbReference type="FunCoup" id="A0LQG8">
    <property type="interactions" value="371"/>
</dbReference>
<dbReference type="STRING" id="335543.Sfum_4004"/>
<dbReference type="KEGG" id="sfu:Sfum_4004"/>
<dbReference type="eggNOG" id="COG0131">
    <property type="taxonomic scope" value="Bacteria"/>
</dbReference>
<dbReference type="HOGENOM" id="CLU_044308_2_0_7"/>
<dbReference type="InParanoid" id="A0LQG8"/>
<dbReference type="OrthoDB" id="9790411at2"/>
<dbReference type="UniPathway" id="UPA00031">
    <property type="reaction ID" value="UER00011"/>
</dbReference>
<dbReference type="Proteomes" id="UP000001784">
    <property type="component" value="Chromosome"/>
</dbReference>
<dbReference type="GO" id="GO:0005737">
    <property type="term" value="C:cytoplasm"/>
    <property type="evidence" value="ECO:0007669"/>
    <property type="project" value="UniProtKB-SubCell"/>
</dbReference>
<dbReference type="GO" id="GO:0004424">
    <property type="term" value="F:imidazoleglycerol-phosphate dehydratase activity"/>
    <property type="evidence" value="ECO:0007669"/>
    <property type="project" value="UniProtKB-UniRule"/>
</dbReference>
<dbReference type="GO" id="GO:0000105">
    <property type="term" value="P:L-histidine biosynthetic process"/>
    <property type="evidence" value="ECO:0007669"/>
    <property type="project" value="UniProtKB-UniRule"/>
</dbReference>
<dbReference type="CDD" id="cd07914">
    <property type="entry name" value="IGPD"/>
    <property type="match status" value="1"/>
</dbReference>
<dbReference type="FunFam" id="3.30.230.40:FF:000001">
    <property type="entry name" value="Imidazoleglycerol-phosphate dehydratase HisB"/>
    <property type="match status" value="1"/>
</dbReference>
<dbReference type="FunFam" id="3.30.230.40:FF:000003">
    <property type="entry name" value="Imidazoleglycerol-phosphate dehydratase HisB"/>
    <property type="match status" value="1"/>
</dbReference>
<dbReference type="Gene3D" id="3.30.230.40">
    <property type="entry name" value="Imidazole glycerol phosphate dehydratase, domain 1"/>
    <property type="match status" value="2"/>
</dbReference>
<dbReference type="HAMAP" id="MF_00076">
    <property type="entry name" value="HisB"/>
    <property type="match status" value="1"/>
</dbReference>
<dbReference type="InterPro" id="IPR038494">
    <property type="entry name" value="IGPD_sf"/>
</dbReference>
<dbReference type="InterPro" id="IPR000807">
    <property type="entry name" value="ImidazoleglycerolP_deHydtase"/>
</dbReference>
<dbReference type="InterPro" id="IPR020565">
    <property type="entry name" value="ImidazoleglycerP_deHydtase_CS"/>
</dbReference>
<dbReference type="InterPro" id="IPR020568">
    <property type="entry name" value="Ribosomal_Su5_D2-typ_SF"/>
</dbReference>
<dbReference type="NCBIfam" id="NF002111">
    <property type="entry name" value="PRK00951.2-1"/>
    <property type="match status" value="1"/>
</dbReference>
<dbReference type="NCBIfam" id="NF002114">
    <property type="entry name" value="PRK00951.2-4"/>
    <property type="match status" value="1"/>
</dbReference>
<dbReference type="NCBIfam" id="NF002115">
    <property type="entry name" value="PRK00951.2-5"/>
    <property type="match status" value="1"/>
</dbReference>
<dbReference type="PANTHER" id="PTHR23133:SF2">
    <property type="entry name" value="IMIDAZOLEGLYCEROL-PHOSPHATE DEHYDRATASE"/>
    <property type="match status" value="1"/>
</dbReference>
<dbReference type="PANTHER" id="PTHR23133">
    <property type="entry name" value="IMIDAZOLEGLYCEROL-PHOSPHATE DEHYDRATASE HIS7"/>
    <property type="match status" value="1"/>
</dbReference>
<dbReference type="Pfam" id="PF00475">
    <property type="entry name" value="IGPD"/>
    <property type="match status" value="1"/>
</dbReference>
<dbReference type="SUPFAM" id="SSF54211">
    <property type="entry name" value="Ribosomal protein S5 domain 2-like"/>
    <property type="match status" value="2"/>
</dbReference>
<dbReference type="PROSITE" id="PS00954">
    <property type="entry name" value="IGP_DEHYDRATASE_1"/>
    <property type="match status" value="1"/>
</dbReference>
<dbReference type="PROSITE" id="PS00955">
    <property type="entry name" value="IGP_DEHYDRATASE_2"/>
    <property type="match status" value="1"/>
</dbReference>
<name>HIS7_SYNFM</name>
<sequence>MAGRRQGTVERITSETKIMADLTVDGEGKAELRTGVPFLDHMLSLFSVHGFFDLKLQAEGDLDVDAHHTVEDIGICLGGALAKALGDRKGIRRYGHAVVPMDEACASVTLDLSNRPFLVYRVPTLAARVGRFETELVPEFFRAFCQHGGATVHVQGLYGSNTHHILEAIFKALGRALDQATRFDERRSGIPSSKGTL</sequence>
<feature type="chain" id="PRO_0000336352" description="Imidazoleglycerol-phosphate dehydratase">
    <location>
        <begin position="1"/>
        <end position="197"/>
    </location>
</feature>